<sequence>MAKETYVRTKPHVNIGTIGHVDHGKTTLTAAISKVLAEKQGITATDFAEIDNAPEEKERGITINTSHIEYETETRHYAHIDAPGHADYVKNMITGAAQMDGAILVVAATDGPMPQTREHILLARQVGVEYLVVFLNKTDLVDDEELVELVEMEVRELLSEYDFPGDDIPVIKGSALKALEGDPEQVKVIEELMDTVDSYIPEPKRETDKPFLMPVEDVFTITGRGTVASGRVDRGVLTTGTEIEIVGLKDEIKKTTVTGIEMFRKTLDEAQAGDNIGALLRGVDRNEIERGQVLAKPGSIKTHKKFKAEVYVLSKEEGGRHTPFFTNYRPQFYFHTTDVTGVVELPAGVEMVMPGDQVTFEIELISPVAIEQGLKFTVREGGHTVGAGTVTEIED</sequence>
<accession>B1MY04</accession>
<keyword id="KW-0963">Cytoplasm</keyword>
<keyword id="KW-0251">Elongation factor</keyword>
<keyword id="KW-0342">GTP-binding</keyword>
<keyword id="KW-0378">Hydrolase</keyword>
<keyword id="KW-0460">Magnesium</keyword>
<keyword id="KW-0479">Metal-binding</keyword>
<keyword id="KW-0547">Nucleotide-binding</keyword>
<keyword id="KW-0648">Protein biosynthesis</keyword>
<keyword id="KW-1185">Reference proteome</keyword>
<feature type="chain" id="PRO_1000095074" description="Elongation factor Tu">
    <location>
        <begin position="1"/>
        <end position="395"/>
    </location>
</feature>
<feature type="domain" description="tr-type G">
    <location>
        <begin position="10"/>
        <end position="204"/>
    </location>
</feature>
<feature type="region of interest" description="G1" evidence="1">
    <location>
        <begin position="19"/>
        <end position="26"/>
    </location>
</feature>
<feature type="region of interest" description="G2" evidence="1">
    <location>
        <begin position="60"/>
        <end position="64"/>
    </location>
</feature>
<feature type="region of interest" description="G3" evidence="1">
    <location>
        <begin position="81"/>
        <end position="84"/>
    </location>
</feature>
<feature type="region of interest" description="G4" evidence="1">
    <location>
        <begin position="136"/>
        <end position="139"/>
    </location>
</feature>
<feature type="region of interest" description="G5" evidence="1">
    <location>
        <begin position="174"/>
        <end position="176"/>
    </location>
</feature>
<feature type="binding site" evidence="2">
    <location>
        <begin position="19"/>
        <end position="26"/>
    </location>
    <ligand>
        <name>GTP</name>
        <dbReference type="ChEBI" id="CHEBI:37565"/>
    </ligand>
</feature>
<feature type="binding site" evidence="2">
    <location>
        <position position="26"/>
    </location>
    <ligand>
        <name>Mg(2+)</name>
        <dbReference type="ChEBI" id="CHEBI:18420"/>
    </ligand>
</feature>
<feature type="binding site" evidence="2">
    <location>
        <begin position="81"/>
        <end position="85"/>
    </location>
    <ligand>
        <name>GTP</name>
        <dbReference type="ChEBI" id="CHEBI:37565"/>
    </ligand>
</feature>
<feature type="binding site" evidence="2">
    <location>
        <begin position="136"/>
        <end position="139"/>
    </location>
    <ligand>
        <name>GTP</name>
        <dbReference type="ChEBI" id="CHEBI:37565"/>
    </ligand>
</feature>
<reference key="1">
    <citation type="journal article" date="2008" name="J. Bacteriol.">
        <title>Complete genome sequence of Leuconostoc citreum KM20.</title>
        <authorList>
            <person name="Kim J.F."/>
            <person name="Jeong H."/>
            <person name="Lee J.-S."/>
            <person name="Choi S.-H."/>
            <person name="Ha M."/>
            <person name="Hur C.-G."/>
            <person name="Kim J.-S."/>
            <person name="Lee S."/>
            <person name="Park H.-S."/>
            <person name="Park Y.-H."/>
            <person name="Oh T.K."/>
        </authorList>
    </citation>
    <scope>NUCLEOTIDE SEQUENCE [LARGE SCALE GENOMIC DNA]</scope>
    <source>
        <strain>KM20</strain>
    </source>
</reference>
<evidence type="ECO:0000250" key="1"/>
<evidence type="ECO:0000255" key="2">
    <source>
        <dbReference type="HAMAP-Rule" id="MF_00118"/>
    </source>
</evidence>
<gene>
    <name evidence="2" type="primary">tuf</name>
    <name type="ordered locus">LCK_00573</name>
</gene>
<name>EFTU_LEUCK</name>
<dbReference type="EC" id="3.6.5.3" evidence="2"/>
<dbReference type="EMBL" id="DQ489736">
    <property type="protein sequence ID" value="ACA82406.1"/>
    <property type="molecule type" value="Genomic_DNA"/>
</dbReference>
<dbReference type="RefSeq" id="WP_004900335.1">
    <property type="nucleotide sequence ID" value="NC_010471.1"/>
</dbReference>
<dbReference type="SMR" id="B1MY04"/>
<dbReference type="STRING" id="349519.LCK_00573"/>
<dbReference type="GeneID" id="61102495"/>
<dbReference type="KEGG" id="lci:LCK_00573"/>
<dbReference type="eggNOG" id="COG0050">
    <property type="taxonomic scope" value="Bacteria"/>
</dbReference>
<dbReference type="HOGENOM" id="CLU_007265_0_1_9"/>
<dbReference type="OrthoDB" id="9804504at2"/>
<dbReference type="Proteomes" id="UP000002166">
    <property type="component" value="Chromosome"/>
</dbReference>
<dbReference type="GO" id="GO:0005829">
    <property type="term" value="C:cytosol"/>
    <property type="evidence" value="ECO:0007669"/>
    <property type="project" value="TreeGrafter"/>
</dbReference>
<dbReference type="GO" id="GO:0005525">
    <property type="term" value="F:GTP binding"/>
    <property type="evidence" value="ECO:0007669"/>
    <property type="project" value="UniProtKB-UniRule"/>
</dbReference>
<dbReference type="GO" id="GO:0003924">
    <property type="term" value="F:GTPase activity"/>
    <property type="evidence" value="ECO:0007669"/>
    <property type="project" value="InterPro"/>
</dbReference>
<dbReference type="GO" id="GO:0003746">
    <property type="term" value="F:translation elongation factor activity"/>
    <property type="evidence" value="ECO:0007669"/>
    <property type="project" value="UniProtKB-UniRule"/>
</dbReference>
<dbReference type="CDD" id="cd01884">
    <property type="entry name" value="EF_Tu"/>
    <property type="match status" value="1"/>
</dbReference>
<dbReference type="CDD" id="cd03697">
    <property type="entry name" value="EFTU_II"/>
    <property type="match status" value="1"/>
</dbReference>
<dbReference type="CDD" id="cd03707">
    <property type="entry name" value="EFTU_III"/>
    <property type="match status" value="1"/>
</dbReference>
<dbReference type="FunFam" id="2.40.30.10:FF:000001">
    <property type="entry name" value="Elongation factor Tu"/>
    <property type="match status" value="1"/>
</dbReference>
<dbReference type="FunFam" id="3.40.50.300:FF:000003">
    <property type="entry name" value="Elongation factor Tu"/>
    <property type="match status" value="1"/>
</dbReference>
<dbReference type="Gene3D" id="3.40.50.300">
    <property type="entry name" value="P-loop containing nucleotide triphosphate hydrolases"/>
    <property type="match status" value="1"/>
</dbReference>
<dbReference type="Gene3D" id="2.40.30.10">
    <property type="entry name" value="Translation factors"/>
    <property type="match status" value="2"/>
</dbReference>
<dbReference type="HAMAP" id="MF_00118_B">
    <property type="entry name" value="EF_Tu_B"/>
    <property type="match status" value="1"/>
</dbReference>
<dbReference type="InterPro" id="IPR041709">
    <property type="entry name" value="EF-Tu_GTP-bd"/>
</dbReference>
<dbReference type="InterPro" id="IPR050055">
    <property type="entry name" value="EF-Tu_GTPase"/>
</dbReference>
<dbReference type="InterPro" id="IPR004161">
    <property type="entry name" value="EFTu-like_2"/>
</dbReference>
<dbReference type="InterPro" id="IPR033720">
    <property type="entry name" value="EFTU_2"/>
</dbReference>
<dbReference type="InterPro" id="IPR031157">
    <property type="entry name" value="G_TR_CS"/>
</dbReference>
<dbReference type="InterPro" id="IPR027417">
    <property type="entry name" value="P-loop_NTPase"/>
</dbReference>
<dbReference type="InterPro" id="IPR005225">
    <property type="entry name" value="Small_GTP-bd"/>
</dbReference>
<dbReference type="InterPro" id="IPR000795">
    <property type="entry name" value="T_Tr_GTP-bd_dom"/>
</dbReference>
<dbReference type="InterPro" id="IPR009000">
    <property type="entry name" value="Transl_B-barrel_sf"/>
</dbReference>
<dbReference type="InterPro" id="IPR009001">
    <property type="entry name" value="Transl_elong_EF1A/Init_IF2_C"/>
</dbReference>
<dbReference type="InterPro" id="IPR004541">
    <property type="entry name" value="Transl_elong_EFTu/EF1A_bac/org"/>
</dbReference>
<dbReference type="InterPro" id="IPR004160">
    <property type="entry name" value="Transl_elong_EFTu/EF1A_C"/>
</dbReference>
<dbReference type="NCBIfam" id="TIGR00485">
    <property type="entry name" value="EF-Tu"/>
    <property type="match status" value="1"/>
</dbReference>
<dbReference type="NCBIfam" id="NF000766">
    <property type="entry name" value="PRK00049.1"/>
    <property type="match status" value="1"/>
</dbReference>
<dbReference type="NCBIfam" id="NF009372">
    <property type="entry name" value="PRK12735.1"/>
    <property type="match status" value="1"/>
</dbReference>
<dbReference type="NCBIfam" id="NF009373">
    <property type="entry name" value="PRK12736.1"/>
    <property type="match status" value="1"/>
</dbReference>
<dbReference type="NCBIfam" id="TIGR00231">
    <property type="entry name" value="small_GTP"/>
    <property type="match status" value="1"/>
</dbReference>
<dbReference type="PANTHER" id="PTHR43721:SF22">
    <property type="entry name" value="ELONGATION FACTOR TU, MITOCHONDRIAL"/>
    <property type="match status" value="1"/>
</dbReference>
<dbReference type="PANTHER" id="PTHR43721">
    <property type="entry name" value="ELONGATION FACTOR TU-RELATED"/>
    <property type="match status" value="1"/>
</dbReference>
<dbReference type="Pfam" id="PF00009">
    <property type="entry name" value="GTP_EFTU"/>
    <property type="match status" value="1"/>
</dbReference>
<dbReference type="Pfam" id="PF03144">
    <property type="entry name" value="GTP_EFTU_D2"/>
    <property type="match status" value="1"/>
</dbReference>
<dbReference type="Pfam" id="PF03143">
    <property type="entry name" value="GTP_EFTU_D3"/>
    <property type="match status" value="1"/>
</dbReference>
<dbReference type="PRINTS" id="PR00315">
    <property type="entry name" value="ELONGATNFCT"/>
</dbReference>
<dbReference type="SUPFAM" id="SSF50465">
    <property type="entry name" value="EF-Tu/eEF-1alpha/eIF2-gamma C-terminal domain"/>
    <property type="match status" value="1"/>
</dbReference>
<dbReference type="SUPFAM" id="SSF52540">
    <property type="entry name" value="P-loop containing nucleoside triphosphate hydrolases"/>
    <property type="match status" value="1"/>
</dbReference>
<dbReference type="SUPFAM" id="SSF50447">
    <property type="entry name" value="Translation proteins"/>
    <property type="match status" value="1"/>
</dbReference>
<dbReference type="PROSITE" id="PS00301">
    <property type="entry name" value="G_TR_1"/>
    <property type="match status" value="1"/>
</dbReference>
<dbReference type="PROSITE" id="PS51722">
    <property type="entry name" value="G_TR_2"/>
    <property type="match status" value="1"/>
</dbReference>
<comment type="function">
    <text evidence="2">GTP hydrolase that promotes the GTP-dependent binding of aminoacyl-tRNA to the A-site of ribosomes during protein biosynthesis.</text>
</comment>
<comment type="catalytic activity">
    <reaction evidence="2">
        <text>GTP + H2O = GDP + phosphate + H(+)</text>
        <dbReference type="Rhea" id="RHEA:19669"/>
        <dbReference type="ChEBI" id="CHEBI:15377"/>
        <dbReference type="ChEBI" id="CHEBI:15378"/>
        <dbReference type="ChEBI" id="CHEBI:37565"/>
        <dbReference type="ChEBI" id="CHEBI:43474"/>
        <dbReference type="ChEBI" id="CHEBI:58189"/>
        <dbReference type="EC" id="3.6.5.3"/>
    </reaction>
    <physiologicalReaction direction="left-to-right" evidence="2">
        <dbReference type="Rhea" id="RHEA:19670"/>
    </physiologicalReaction>
</comment>
<comment type="subunit">
    <text evidence="2">Monomer.</text>
</comment>
<comment type="subcellular location">
    <subcellularLocation>
        <location evidence="2">Cytoplasm</location>
    </subcellularLocation>
</comment>
<comment type="similarity">
    <text evidence="2">Belongs to the TRAFAC class translation factor GTPase superfamily. Classic translation factor GTPase family. EF-Tu/EF-1A subfamily.</text>
</comment>
<proteinExistence type="inferred from homology"/>
<protein>
    <recommendedName>
        <fullName evidence="2">Elongation factor Tu</fullName>
        <shortName evidence="2">EF-Tu</shortName>
        <ecNumber evidence="2">3.6.5.3</ecNumber>
    </recommendedName>
</protein>
<organism>
    <name type="scientific">Leuconostoc citreum (strain KM20)</name>
    <dbReference type="NCBI Taxonomy" id="349519"/>
    <lineage>
        <taxon>Bacteria</taxon>
        <taxon>Bacillati</taxon>
        <taxon>Bacillota</taxon>
        <taxon>Bacilli</taxon>
        <taxon>Lactobacillales</taxon>
        <taxon>Lactobacillaceae</taxon>
        <taxon>Leuconostoc</taxon>
    </lineage>
</organism>